<sequence length="97" mass="10704">MPSSNGPRQATRNKLKNDARERGTSPPQRSIEEYDDGEKVHLKLDPSVPNGQFHPRFNGRTGTVVGEQGDAFKVEIEDGNVTKTVIAAPAHLRRQQA</sequence>
<feature type="chain" id="PRO_0000243373" description="Large ribosomal subunit protein eL21">
    <location>
        <begin position="1"/>
        <end position="97"/>
    </location>
</feature>
<feature type="region of interest" description="Disordered" evidence="2">
    <location>
        <begin position="1"/>
        <end position="35"/>
    </location>
</feature>
<feature type="compositionally biased region" description="Polar residues" evidence="2">
    <location>
        <begin position="1"/>
        <end position="12"/>
    </location>
</feature>
<reference key="1">
    <citation type="journal article" date="2005" name="Genome Res.">
        <title>Living with two extremes: conclusions from the genome sequence of Natronomonas pharaonis.</title>
        <authorList>
            <person name="Falb M."/>
            <person name="Pfeiffer F."/>
            <person name="Palm P."/>
            <person name="Rodewald K."/>
            <person name="Hickmann V."/>
            <person name="Tittor J."/>
            <person name="Oesterhelt D."/>
        </authorList>
    </citation>
    <scope>NUCLEOTIDE SEQUENCE [LARGE SCALE GENOMIC DNA]</scope>
    <source>
        <strain>ATCC 35678 / DSM 2160 / CIP 103997 / JCM 8858 / NBRC 14720 / NCIMB 2260 / Gabara</strain>
    </source>
</reference>
<organism>
    <name type="scientific">Natronomonas pharaonis (strain ATCC 35678 / DSM 2160 / CIP 103997 / JCM 8858 / NBRC 14720 / NCIMB 2260 / Gabara)</name>
    <name type="common">Halobacterium pharaonis</name>
    <dbReference type="NCBI Taxonomy" id="348780"/>
    <lineage>
        <taxon>Archaea</taxon>
        <taxon>Methanobacteriati</taxon>
        <taxon>Methanobacteriota</taxon>
        <taxon>Stenosarchaea group</taxon>
        <taxon>Halobacteria</taxon>
        <taxon>Halobacteriales</taxon>
        <taxon>Haloarculaceae</taxon>
        <taxon>Natronomonas</taxon>
    </lineage>
</organism>
<comment type="similarity">
    <text evidence="1">Belongs to the eukaryotic ribosomal protein eL21 family.</text>
</comment>
<accession>Q3IPL7</accession>
<evidence type="ECO:0000255" key="1">
    <source>
        <dbReference type="HAMAP-Rule" id="MF_00369"/>
    </source>
</evidence>
<evidence type="ECO:0000256" key="2">
    <source>
        <dbReference type="SAM" id="MobiDB-lite"/>
    </source>
</evidence>
<evidence type="ECO:0000305" key="3"/>
<name>RL21_NATPD</name>
<dbReference type="EMBL" id="CR936257">
    <property type="protein sequence ID" value="CAI49933.1"/>
    <property type="molecule type" value="Genomic_DNA"/>
</dbReference>
<dbReference type="RefSeq" id="WP_011323551.1">
    <property type="nucleotide sequence ID" value="NC_007426.1"/>
</dbReference>
<dbReference type="SMR" id="Q3IPL7"/>
<dbReference type="STRING" id="348780.NP_3684A"/>
<dbReference type="EnsemblBacteria" id="CAI49933">
    <property type="protein sequence ID" value="CAI49933"/>
    <property type="gene ID" value="NP_3684A"/>
</dbReference>
<dbReference type="GeneID" id="3703131"/>
<dbReference type="KEGG" id="nph:NP_3684A"/>
<dbReference type="eggNOG" id="arCOG04129">
    <property type="taxonomic scope" value="Archaea"/>
</dbReference>
<dbReference type="HOGENOM" id="CLU_103610_1_1_2"/>
<dbReference type="OrthoDB" id="6295at2157"/>
<dbReference type="Proteomes" id="UP000002698">
    <property type="component" value="Chromosome"/>
</dbReference>
<dbReference type="GO" id="GO:1990904">
    <property type="term" value="C:ribonucleoprotein complex"/>
    <property type="evidence" value="ECO:0007669"/>
    <property type="project" value="UniProtKB-KW"/>
</dbReference>
<dbReference type="GO" id="GO:0005840">
    <property type="term" value="C:ribosome"/>
    <property type="evidence" value="ECO:0007669"/>
    <property type="project" value="UniProtKB-KW"/>
</dbReference>
<dbReference type="GO" id="GO:0003735">
    <property type="term" value="F:structural constituent of ribosome"/>
    <property type="evidence" value="ECO:0007669"/>
    <property type="project" value="InterPro"/>
</dbReference>
<dbReference type="GO" id="GO:0006412">
    <property type="term" value="P:translation"/>
    <property type="evidence" value="ECO:0007669"/>
    <property type="project" value="UniProtKB-UniRule"/>
</dbReference>
<dbReference type="Gene3D" id="2.30.30.70">
    <property type="entry name" value="Ribosomal protein L21"/>
    <property type="match status" value="1"/>
</dbReference>
<dbReference type="HAMAP" id="MF_00369">
    <property type="entry name" value="Ribosomal_eL21"/>
    <property type="match status" value="1"/>
</dbReference>
<dbReference type="InterPro" id="IPR001147">
    <property type="entry name" value="Ribosomal_eL21"/>
</dbReference>
<dbReference type="InterPro" id="IPR022856">
    <property type="entry name" value="Ribosomal_eL21_arc"/>
</dbReference>
<dbReference type="InterPro" id="IPR018259">
    <property type="entry name" value="Ribosomal_eL21_CS"/>
</dbReference>
<dbReference type="InterPro" id="IPR036948">
    <property type="entry name" value="Ribosomal_eL21_sf"/>
</dbReference>
<dbReference type="InterPro" id="IPR008991">
    <property type="entry name" value="Translation_prot_SH3-like_sf"/>
</dbReference>
<dbReference type="NCBIfam" id="NF003303">
    <property type="entry name" value="PRK04306.1"/>
    <property type="match status" value="1"/>
</dbReference>
<dbReference type="Pfam" id="PF01157">
    <property type="entry name" value="Ribosomal_L21e"/>
    <property type="match status" value="1"/>
</dbReference>
<dbReference type="SUPFAM" id="SSF50104">
    <property type="entry name" value="Translation proteins SH3-like domain"/>
    <property type="match status" value="1"/>
</dbReference>
<dbReference type="PROSITE" id="PS01171">
    <property type="entry name" value="RIBOSOMAL_L21E"/>
    <property type="match status" value="1"/>
</dbReference>
<keyword id="KW-1185">Reference proteome</keyword>
<keyword id="KW-0687">Ribonucleoprotein</keyword>
<keyword id="KW-0689">Ribosomal protein</keyword>
<protein>
    <recommendedName>
        <fullName evidence="1">Large ribosomal subunit protein eL21</fullName>
    </recommendedName>
    <alternativeName>
        <fullName evidence="3">50S ribosomal protein L21e</fullName>
    </alternativeName>
</protein>
<gene>
    <name evidence="1" type="primary">rpl21e</name>
    <name type="ordered locus">NP_3684A</name>
</gene>
<proteinExistence type="inferred from homology"/>